<gene>
    <name evidence="1" type="primary">ispE</name>
    <name type="ordered locus">ECH_0757</name>
</gene>
<comment type="function">
    <text evidence="1">Catalyzes the phosphorylation of the position 2 hydroxy group of 4-diphosphocytidyl-2C-methyl-D-erythritol.</text>
</comment>
<comment type="catalytic activity">
    <reaction evidence="1">
        <text>4-CDP-2-C-methyl-D-erythritol + ATP = 4-CDP-2-C-methyl-D-erythritol 2-phosphate + ADP + H(+)</text>
        <dbReference type="Rhea" id="RHEA:18437"/>
        <dbReference type="ChEBI" id="CHEBI:15378"/>
        <dbReference type="ChEBI" id="CHEBI:30616"/>
        <dbReference type="ChEBI" id="CHEBI:57823"/>
        <dbReference type="ChEBI" id="CHEBI:57919"/>
        <dbReference type="ChEBI" id="CHEBI:456216"/>
        <dbReference type="EC" id="2.7.1.148"/>
    </reaction>
</comment>
<comment type="pathway">
    <text evidence="1">Isoprenoid biosynthesis; isopentenyl diphosphate biosynthesis via DXP pathway; isopentenyl diphosphate from 1-deoxy-D-xylulose 5-phosphate: step 3/6.</text>
</comment>
<comment type="similarity">
    <text evidence="1">Belongs to the GHMP kinase family. IspE subfamily.</text>
</comment>
<keyword id="KW-0067">ATP-binding</keyword>
<keyword id="KW-0414">Isoprene biosynthesis</keyword>
<keyword id="KW-0418">Kinase</keyword>
<keyword id="KW-0547">Nucleotide-binding</keyword>
<keyword id="KW-1185">Reference proteome</keyword>
<keyword id="KW-0808">Transferase</keyword>
<accession>Q2GG78</accession>
<dbReference type="EC" id="2.7.1.148" evidence="1"/>
<dbReference type="EMBL" id="CP000236">
    <property type="protein sequence ID" value="ABD44533.1"/>
    <property type="molecule type" value="Genomic_DNA"/>
</dbReference>
<dbReference type="RefSeq" id="WP_006010025.1">
    <property type="nucleotide sequence ID" value="NC_007799.1"/>
</dbReference>
<dbReference type="SMR" id="Q2GG78"/>
<dbReference type="STRING" id="205920.ECH_0757"/>
<dbReference type="KEGG" id="ech:ECH_0757"/>
<dbReference type="eggNOG" id="COG1947">
    <property type="taxonomic scope" value="Bacteria"/>
</dbReference>
<dbReference type="HOGENOM" id="CLU_053057_1_0_5"/>
<dbReference type="OrthoDB" id="9809438at2"/>
<dbReference type="UniPathway" id="UPA00056">
    <property type="reaction ID" value="UER00094"/>
</dbReference>
<dbReference type="Proteomes" id="UP000008320">
    <property type="component" value="Chromosome"/>
</dbReference>
<dbReference type="GO" id="GO:0050515">
    <property type="term" value="F:4-(cytidine 5'-diphospho)-2-C-methyl-D-erythritol kinase activity"/>
    <property type="evidence" value="ECO:0007669"/>
    <property type="project" value="UniProtKB-UniRule"/>
</dbReference>
<dbReference type="GO" id="GO:0005524">
    <property type="term" value="F:ATP binding"/>
    <property type="evidence" value="ECO:0007669"/>
    <property type="project" value="UniProtKB-UniRule"/>
</dbReference>
<dbReference type="GO" id="GO:0019288">
    <property type="term" value="P:isopentenyl diphosphate biosynthetic process, methylerythritol 4-phosphate pathway"/>
    <property type="evidence" value="ECO:0007669"/>
    <property type="project" value="UniProtKB-UniRule"/>
</dbReference>
<dbReference type="GO" id="GO:0016114">
    <property type="term" value="P:terpenoid biosynthetic process"/>
    <property type="evidence" value="ECO:0007669"/>
    <property type="project" value="InterPro"/>
</dbReference>
<dbReference type="Gene3D" id="3.30.230.10">
    <property type="match status" value="1"/>
</dbReference>
<dbReference type="Gene3D" id="3.30.70.890">
    <property type="entry name" value="GHMP kinase, C-terminal domain"/>
    <property type="match status" value="1"/>
</dbReference>
<dbReference type="HAMAP" id="MF_00061">
    <property type="entry name" value="IspE"/>
    <property type="match status" value="1"/>
</dbReference>
<dbReference type="InterPro" id="IPR013750">
    <property type="entry name" value="GHMP_kinase_C_dom"/>
</dbReference>
<dbReference type="InterPro" id="IPR036554">
    <property type="entry name" value="GHMP_kinase_C_sf"/>
</dbReference>
<dbReference type="InterPro" id="IPR006204">
    <property type="entry name" value="GHMP_kinase_N_dom"/>
</dbReference>
<dbReference type="InterPro" id="IPR004424">
    <property type="entry name" value="IspE"/>
</dbReference>
<dbReference type="InterPro" id="IPR020568">
    <property type="entry name" value="Ribosomal_Su5_D2-typ_SF"/>
</dbReference>
<dbReference type="InterPro" id="IPR014721">
    <property type="entry name" value="Ribsml_uS5_D2-typ_fold_subgr"/>
</dbReference>
<dbReference type="NCBIfam" id="TIGR00154">
    <property type="entry name" value="ispE"/>
    <property type="match status" value="1"/>
</dbReference>
<dbReference type="NCBIfam" id="NF011202">
    <property type="entry name" value="PRK14608.1"/>
    <property type="match status" value="1"/>
</dbReference>
<dbReference type="PANTHER" id="PTHR43527">
    <property type="entry name" value="4-DIPHOSPHOCYTIDYL-2-C-METHYL-D-ERYTHRITOL KINASE, CHLOROPLASTIC"/>
    <property type="match status" value="1"/>
</dbReference>
<dbReference type="PANTHER" id="PTHR43527:SF2">
    <property type="entry name" value="4-DIPHOSPHOCYTIDYL-2-C-METHYL-D-ERYTHRITOL KINASE, CHLOROPLASTIC"/>
    <property type="match status" value="1"/>
</dbReference>
<dbReference type="Pfam" id="PF08544">
    <property type="entry name" value="GHMP_kinases_C"/>
    <property type="match status" value="1"/>
</dbReference>
<dbReference type="Pfam" id="PF00288">
    <property type="entry name" value="GHMP_kinases_N"/>
    <property type="match status" value="1"/>
</dbReference>
<dbReference type="PIRSF" id="PIRSF010376">
    <property type="entry name" value="IspE"/>
    <property type="match status" value="1"/>
</dbReference>
<dbReference type="SUPFAM" id="SSF55060">
    <property type="entry name" value="GHMP Kinase, C-terminal domain"/>
    <property type="match status" value="1"/>
</dbReference>
<dbReference type="SUPFAM" id="SSF54211">
    <property type="entry name" value="Ribosomal protein S5 domain 2-like"/>
    <property type="match status" value="1"/>
</dbReference>
<evidence type="ECO:0000255" key="1">
    <source>
        <dbReference type="HAMAP-Rule" id="MF_00061"/>
    </source>
</evidence>
<feature type="chain" id="PRO_1000007844" description="4-diphosphocytidyl-2-C-methyl-D-erythritol kinase">
    <location>
        <begin position="1"/>
        <end position="282"/>
    </location>
</feature>
<feature type="active site" evidence="1">
    <location>
        <position position="11"/>
    </location>
</feature>
<feature type="active site" evidence="1">
    <location>
        <position position="133"/>
    </location>
</feature>
<feature type="binding site" evidence="1">
    <location>
        <begin position="93"/>
        <end position="103"/>
    </location>
    <ligand>
        <name>ATP</name>
        <dbReference type="ChEBI" id="CHEBI:30616"/>
    </ligand>
</feature>
<proteinExistence type="inferred from homology"/>
<reference key="1">
    <citation type="journal article" date="2006" name="PLoS Genet.">
        <title>Comparative genomics of emerging human ehrlichiosis agents.</title>
        <authorList>
            <person name="Dunning Hotopp J.C."/>
            <person name="Lin M."/>
            <person name="Madupu R."/>
            <person name="Crabtree J."/>
            <person name="Angiuoli S.V."/>
            <person name="Eisen J.A."/>
            <person name="Seshadri R."/>
            <person name="Ren Q."/>
            <person name="Wu M."/>
            <person name="Utterback T.R."/>
            <person name="Smith S."/>
            <person name="Lewis M."/>
            <person name="Khouri H."/>
            <person name="Zhang C."/>
            <person name="Niu H."/>
            <person name="Lin Q."/>
            <person name="Ohashi N."/>
            <person name="Zhi N."/>
            <person name="Nelson W.C."/>
            <person name="Brinkac L.M."/>
            <person name="Dodson R.J."/>
            <person name="Rosovitz M.J."/>
            <person name="Sundaram J.P."/>
            <person name="Daugherty S.C."/>
            <person name="Davidsen T."/>
            <person name="Durkin A.S."/>
            <person name="Gwinn M.L."/>
            <person name="Haft D.H."/>
            <person name="Selengut J.D."/>
            <person name="Sullivan S.A."/>
            <person name="Zafar N."/>
            <person name="Zhou L."/>
            <person name="Benahmed F."/>
            <person name="Forberger H."/>
            <person name="Halpin R."/>
            <person name="Mulligan S."/>
            <person name="Robinson J."/>
            <person name="White O."/>
            <person name="Rikihisa Y."/>
            <person name="Tettelin H."/>
        </authorList>
    </citation>
    <scope>NUCLEOTIDE SEQUENCE [LARGE SCALE GENOMIC DNA]</scope>
    <source>
        <strain>ATCC CRL-10679 / Arkansas</strain>
    </source>
</reference>
<organism>
    <name type="scientific">Ehrlichia chaffeensis (strain ATCC CRL-10679 / Arkansas)</name>
    <dbReference type="NCBI Taxonomy" id="205920"/>
    <lineage>
        <taxon>Bacteria</taxon>
        <taxon>Pseudomonadati</taxon>
        <taxon>Pseudomonadota</taxon>
        <taxon>Alphaproteobacteria</taxon>
        <taxon>Rickettsiales</taxon>
        <taxon>Anaplasmataceae</taxon>
        <taxon>Ehrlichia</taxon>
    </lineage>
</organism>
<name>ISPE_EHRCR</name>
<sequence length="282" mass="31277">MLKFLVKAPAKVNLFLHITGKRSDQHHYLESLFVFVNVYDILEVDVGGSKRGVYFSNLRISKYNNTVYKAIELLLKHSAVCPNVSVSIIKNILVSAGLAGGSADAAAIMRLLGNMWNIDYTLLQDLALKIGSDVPACLESKTLFAKGVGEDILLLPDLLLPKYIILVAPRGKTLSTAKVFNNYQSATYSPSICDKLPVKQDDWMELICNAKNDLLEVALKFVPEIEEILFVLKQLKNSVIARMTGSGATCFALFNELSHAEDAARKLQMTRPDWIIFNAKIL</sequence>
<protein>
    <recommendedName>
        <fullName evidence="1">4-diphosphocytidyl-2-C-methyl-D-erythritol kinase</fullName>
        <shortName evidence="1">CMK</shortName>
        <ecNumber evidence="1">2.7.1.148</ecNumber>
    </recommendedName>
    <alternativeName>
        <fullName evidence="1">4-(cytidine-5'-diphospho)-2-C-methyl-D-erythritol kinase</fullName>
    </alternativeName>
</protein>